<comment type="function">
    <text evidence="1">Regulates membrane-cell wall junctions and localized cell wall deposition. Required for establishment of the Casparian strip membrane domain (CSD) and the subsequent formation of Casparian strips, a cell wall modification of the root endodermis that determines an apoplastic barrier between the intraorganismal apoplasm and the extraorganismal apoplasm and prevents lateral diffusion (By similarity).</text>
</comment>
<comment type="subunit">
    <text evidence="1">Homodimer and heterodimers.</text>
</comment>
<comment type="subcellular location">
    <subcellularLocation>
        <location evidence="1">Cell membrane</location>
        <topology evidence="1">Multi-pass membrane protein</topology>
    </subcellularLocation>
    <text evidence="1">Very restricted localization following a belt shape within the plasma membrane which coincides with the position of the Casparian strip membrane domain in the root endodermis.</text>
</comment>
<comment type="similarity">
    <text evidence="3">Belongs to the Casparian strip membrane proteins (CASP) family.</text>
</comment>
<organism>
    <name type="scientific">Raphanus sativus</name>
    <name type="common">Radish</name>
    <name type="synonym">Raphanus raphanistrum var. sativus</name>
    <dbReference type="NCBI Taxonomy" id="3726"/>
    <lineage>
        <taxon>Eukaryota</taxon>
        <taxon>Viridiplantae</taxon>
        <taxon>Streptophyta</taxon>
        <taxon>Embryophyta</taxon>
        <taxon>Tracheophyta</taxon>
        <taxon>Spermatophyta</taxon>
        <taxon>Magnoliopsida</taxon>
        <taxon>eudicotyledons</taxon>
        <taxon>Gunneridae</taxon>
        <taxon>Pentapetalae</taxon>
        <taxon>rosids</taxon>
        <taxon>malvids</taxon>
        <taxon>Brassicales</taxon>
        <taxon>Brassicaceae</taxon>
        <taxon>Brassiceae</taxon>
        <taxon>Raphanus</taxon>
    </lineage>
</organism>
<keyword id="KW-1003">Cell membrane</keyword>
<keyword id="KW-0961">Cell wall biogenesis/degradation</keyword>
<keyword id="KW-0472">Membrane</keyword>
<keyword id="KW-1185">Reference proteome</keyword>
<keyword id="KW-0812">Transmembrane</keyword>
<keyword id="KW-1133">Transmembrane helix</keyword>
<proteinExistence type="evidence at transcript level"/>
<accession>P0DI46</accession>
<sequence length="204" mass="21659">MKNESTFIDVPADSSSAMKGKAPLIGVAKDHTASGSGGYNRGLSIFDFLLRLAAIVAASVAAGTMFTSDETLPFFTQFLQFEAGYDDLPTFQFFVIAMSLVSGYIVLSLPISVVTIVRPLAAAPRLLLLVLDTAVMGLTMAAASSAAAISYVAHNGNQNTNWLPICQQFFDFCQKTSGAVVSSFVAVVFFMILVVLSGVALERH</sequence>
<dbReference type="EMBL" id="EX898294">
    <property type="status" value="NOT_ANNOTATED_CDS"/>
    <property type="molecule type" value="mRNA"/>
</dbReference>
<dbReference type="SMR" id="P0DI46"/>
<dbReference type="Proteomes" id="UP000504610">
    <property type="component" value="Unplaced"/>
</dbReference>
<dbReference type="GO" id="GO:0005886">
    <property type="term" value="C:plasma membrane"/>
    <property type="evidence" value="ECO:0007669"/>
    <property type="project" value="UniProtKB-SubCell"/>
</dbReference>
<dbReference type="GO" id="GO:0071555">
    <property type="term" value="P:cell wall organization"/>
    <property type="evidence" value="ECO:0007669"/>
    <property type="project" value="UniProtKB-KW"/>
</dbReference>
<dbReference type="InterPro" id="IPR006459">
    <property type="entry name" value="CASP/CASPL"/>
</dbReference>
<dbReference type="InterPro" id="IPR006702">
    <property type="entry name" value="CASP_dom"/>
</dbReference>
<dbReference type="InterPro" id="IPR044173">
    <property type="entry name" value="CASPL"/>
</dbReference>
<dbReference type="NCBIfam" id="TIGR01569">
    <property type="entry name" value="A_tha_TIGR01569"/>
    <property type="match status" value="1"/>
</dbReference>
<dbReference type="PANTHER" id="PTHR36488:SF11">
    <property type="entry name" value="CASP-LIKE PROTEIN"/>
    <property type="match status" value="1"/>
</dbReference>
<dbReference type="PANTHER" id="PTHR36488">
    <property type="entry name" value="CASP-LIKE PROTEIN 1U1"/>
    <property type="match status" value="1"/>
</dbReference>
<dbReference type="Pfam" id="PF04535">
    <property type="entry name" value="CASP_dom"/>
    <property type="match status" value="1"/>
</dbReference>
<evidence type="ECO:0000250" key="1"/>
<evidence type="ECO:0000255" key="2"/>
<evidence type="ECO:0000305" key="3"/>
<feature type="chain" id="PRO_0000417803" description="Casparian strip membrane protein 2">
    <location>
        <begin position="1"/>
        <end position="204"/>
    </location>
</feature>
<feature type="topological domain" description="Cytoplasmic" evidence="2">
    <location>
        <begin position="1"/>
        <end position="41"/>
    </location>
</feature>
<feature type="transmembrane region" description="Helical" evidence="2">
    <location>
        <begin position="42"/>
        <end position="62"/>
    </location>
</feature>
<feature type="topological domain" description="Extracellular" evidence="2">
    <location>
        <begin position="63"/>
        <end position="92"/>
    </location>
</feature>
<feature type="transmembrane region" description="Helical" evidence="2">
    <location>
        <begin position="93"/>
        <end position="113"/>
    </location>
</feature>
<feature type="topological domain" description="Cytoplasmic" evidence="2">
    <location>
        <begin position="114"/>
        <end position="125"/>
    </location>
</feature>
<feature type="transmembrane region" description="Helical" evidence="2">
    <location>
        <begin position="126"/>
        <end position="146"/>
    </location>
</feature>
<feature type="topological domain" description="Extracellular" evidence="2">
    <location>
        <begin position="147"/>
        <end position="178"/>
    </location>
</feature>
<feature type="transmembrane region" description="Helical" evidence="2">
    <location>
        <begin position="179"/>
        <end position="199"/>
    </location>
</feature>
<feature type="topological domain" description="Cytoplasmic" evidence="2">
    <location>
        <begin position="200"/>
        <end position="204"/>
    </location>
</feature>
<protein>
    <recommendedName>
        <fullName>Casparian strip membrane protein 2</fullName>
        <shortName>RsCASP2</shortName>
    </recommendedName>
</protein>
<name>CASP2_RAPSA</name>
<reference key="1">
    <citation type="submission" date="2008-02" db="EMBL/GenBank/DDBJ databases">
        <title>Comparative cDNA sequencing in radish (Raphanus), a crop, weed, and model system in ecology and evolution.</title>
        <authorList>
            <person name="Conner J.K."/>
            <person name="Shiu S.H."/>
            <person name="Xiao Y."/>
        </authorList>
    </citation>
    <scope>NUCLEOTIDE SEQUENCE [LARGE SCALE MRNA]</scope>
    <source>
        <tissue>Seedling</tissue>
    </source>
</reference>
<reference key="2">
    <citation type="journal article" date="2014" name="Plant Physiol.">
        <title>Functional and evolutionary analysis of the CASPARIAN STRIP MEMBRANE DOMAIN PROTEIN family.</title>
        <authorList>
            <person name="Roppolo D."/>
            <person name="Boeckmann B."/>
            <person name="Pfister A."/>
            <person name="Boutet E."/>
            <person name="Rubio M.C."/>
            <person name="Denervaud-Tendon V."/>
            <person name="Vermeer J.E."/>
            <person name="Gheyselinck J."/>
            <person name="Xenarios I."/>
            <person name="Geldner N."/>
        </authorList>
    </citation>
    <scope>GENE FAMILY</scope>
    <scope>NOMENCLATURE</scope>
</reference>